<protein>
    <recommendedName>
        <fullName>Sodium/potassium-transporting ATPase subunit beta-3</fullName>
    </recommendedName>
    <alternativeName>
        <fullName>Sodium/potassium-dependent ATPase subunit beta-3</fullName>
        <shortName>ATPB-3</shortName>
    </alternativeName>
</protein>
<dbReference type="EMBL" id="M37788">
    <property type="protein sequence ID" value="AAA49650.1"/>
    <property type="molecule type" value="mRNA"/>
</dbReference>
<dbReference type="PIR" id="A38411">
    <property type="entry name" value="A38411"/>
</dbReference>
<dbReference type="SMR" id="P21188"/>
<dbReference type="GlyCosmos" id="P21188">
    <property type="glycosylation" value="4 sites, No reported glycans"/>
</dbReference>
<dbReference type="AGR" id="Xenbase:XB-GENE-17338245"/>
<dbReference type="Xenbase" id="XB-GENE-17338245">
    <property type="gene designation" value="atp1b3.S"/>
</dbReference>
<dbReference type="Proteomes" id="UP000186698">
    <property type="component" value="Unplaced"/>
</dbReference>
<dbReference type="GO" id="GO:0005890">
    <property type="term" value="C:sodium:potassium-exchanging ATPase complex"/>
    <property type="evidence" value="ECO:0000318"/>
    <property type="project" value="GO_Central"/>
</dbReference>
<dbReference type="GO" id="GO:0001671">
    <property type="term" value="F:ATPase activator activity"/>
    <property type="evidence" value="ECO:0000318"/>
    <property type="project" value="GO_Central"/>
</dbReference>
<dbReference type="GO" id="GO:0030007">
    <property type="term" value="P:intracellular potassium ion homeostasis"/>
    <property type="evidence" value="ECO:0000318"/>
    <property type="project" value="GO_Central"/>
</dbReference>
<dbReference type="GO" id="GO:0006883">
    <property type="term" value="P:intracellular sodium ion homeostasis"/>
    <property type="evidence" value="ECO:0000318"/>
    <property type="project" value="GO_Central"/>
</dbReference>
<dbReference type="GO" id="GO:1990573">
    <property type="term" value="P:potassium ion import across plasma membrane"/>
    <property type="evidence" value="ECO:0000318"/>
    <property type="project" value="GO_Central"/>
</dbReference>
<dbReference type="GO" id="GO:0036376">
    <property type="term" value="P:sodium ion export across plasma membrane"/>
    <property type="evidence" value="ECO:0000318"/>
    <property type="project" value="GO_Central"/>
</dbReference>
<dbReference type="FunFam" id="1.20.5.170:FF:000068">
    <property type="entry name" value="Sodium/potassium-transporting ATPase subunit beta"/>
    <property type="match status" value="1"/>
</dbReference>
<dbReference type="FunFam" id="2.60.40.1660:FF:000009">
    <property type="entry name" value="Sodium/potassium-transporting ATPase subunit beta"/>
    <property type="match status" value="1"/>
</dbReference>
<dbReference type="Gene3D" id="2.60.40.1660">
    <property type="entry name" value="Na, k-atpase alpha subunit"/>
    <property type="match status" value="1"/>
</dbReference>
<dbReference type="InterPro" id="IPR000402">
    <property type="entry name" value="Na/K_ATPase_sub_beta"/>
</dbReference>
<dbReference type="InterPro" id="IPR038702">
    <property type="entry name" value="Na/K_ATPase_sub_beta_sf"/>
</dbReference>
<dbReference type="NCBIfam" id="TIGR01107">
    <property type="entry name" value="Na_K_ATPase_bet"/>
    <property type="match status" value="1"/>
</dbReference>
<dbReference type="PANTHER" id="PTHR11523">
    <property type="entry name" value="SODIUM/POTASSIUM-DEPENDENT ATPASE BETA SUBUNIT"/>
    <property type="match status" value="1"/>
</dbReference>
<dbReference type="PANTHER" id="PTHR11523:SF47">
    <property type="entry name" value="SODIUM_POTASSIUM-TRANSPORTING ATPASE SUBUNIT BETA-3"/>
    <property type="match status" value="1"/>
</dbReference>
<dbReference type="Pfam" id="PF00287">
    <property type="entry name" value="Na_K-ATPase"/>
    <property type="match status" value="1"/>
</dbReference>
<dbReference type="PROSITE" id="PS00390">
    <property type="entry name" value="ATPASE_NA_K_BETA_1"/>
    <property type="match status" value="1"/>
</dbReference>
<dbReference type="PROSITE" id="PS00391">
    <property type="entry name" value="ATPASE_NA_K_BETA_2"/>
    <property type="match status" value="1"/>
</dbReference>
<accession>P21188</accession>
<keyword id="KW-1003">Cell membrane</keyword>
<keyword id="KW-1015">Disulfide bond</keyword>
<keyword id="KW-0325">Glycoprotein</keyword>
<keyword id="KW-0406">Ion transport</keyword>
<keyword id="KW-0472">Membrane</keyword>
<keyword id="KW-0630">Potassium</keyword>
<keyword id="KW-0633">Potassium transport</keyword>
<keyword id="KW-1185">Reference proteome</keyword>
<keyword id="KW-0735">Signal-anchor</keyword>
<keyword id="KW-0915">Sodium</keyword>
<keyword id="KW-0739">Sodium transport</keyword>
<keyword id="KW-0740">Sodium/potassium transport</keyword>
<keyword id="KW-0812">Transmembrane</keyword>
<keyword id="KW-1133">Transmembrane helix</keyword>
<keyword id="KW-0813">Transport</keyword>
<sequence>MAKEENKGSEQSGSDWKQFIYNPQKGEFMGRTASSWALILLFYLVFYGFLAGLFTLTMWVMLQTLDDSVPKYRDRVSSPGLMISPKSAGLEIKFSRSKTQSYMEYVQTLNTFLAPYNDSIQAKNEFCPPGLYFDQDEEVEKKTCQFNRTSLGICSGIEDPMFGYGEGKPCVIVKINRIIGLKPEGNPKINCTSKTEDVNLQYFPDNGKIDLMYFPYYGKKTHVNYVQPVVAVKISPSNFTSEEIAVECKIHGSRNLKNEDERDKFLGRVTFKVKITE</sequence>
<evidence type="ECO:0000250" key="1"/>
<evidence type="ECO:0000250" key="2">
    <source>
        <dbReference type="UniProtKB" id="P54709"/>
    </source>
</evidence>
<evidence type="ECO:0000255" key="3"/>
<evidence type="ECO:0000305" key="4"/>
<proteinExistence type="evidence at transcript level"/>
<organism>
    <name type="scientific">Xenopus laevis</name>
    <name type="common">African clawed frog</name>
    <dbReference type="NCBI Taxonomy" id="8355"/>
    <lineage>
        <taxon>Eukaryota</taxon>
        <taxon>Metazoa</taxon>
        <taxon>Chordata</taxon>
        <taxon>Craniata</taxon>
        <taxon>Vertebrata</taxon>
        <taxon>Euteleostomi</taxon>
        <taxon>Amphibia</taxon>
        <taxon>Batrachia</taxon>
        <taxon>Anura</taxon>
        <taxon>Pipoidea</taxon>
        <taxon>Pipidae</taxon>
        <taxon>Xenopodinae</taxon>
        <taxon>Xenopus</taxon>
        <taxon>Xenopus</taxon>
    </lineage>
</organism>
<feature type="chain" id="PRO_0000219112" description="Sodium/potassium-transporting ATPase subunit beta-3">
    <location>
        <begin position="1"/>
        <end position="277"/>
    </location>
</feature>
<feature type="topological domain" description="Cytoplasmic" evidence="3">
    <location>
        <begin position="1"/>
        <end position="35"/>
    </location>
</feature>
<feature type="transmembrane region" description="Helical; Signal-anchor for type II membrane protein" evidence="3">
    <location>
        <begin position="36"/>
        <end position="56"/>
    </location>
</feature>
<feature type="topological domain" description="Extracellular" evidence="3">
    <location>
        <begin position="57"/>
        <end position="277"/>
    </location>
</feature>
<feature type="glycosylation site" description="N-linked (GlcNAc...) asparagine" evidence="3">
    <location>
        <position position="117"/>
    </location>
</feature>
<feature type="glycosylation site" description="N-linked (GlcNAc...) asparagine" evidence="3">
    <location>
        <position position="147"/>
    </location>
</feature>
<feature type="glycosylation site" description="N-linked (GlcNAc...) asparagine" evidence="3">
    <location>
        <position position="190"/>
    </location>
</feature>
<feature type="glycosylation site" description="N-linked (GlcNAc...) asparagine" evidence="3">
    <location>
        <position position="238"/>
    </location>
</feature>
<feature type="disulfide bond" evidence="1">
    <location>
        <begin position="127"/>
        <end position="144"/>
    </location>
</feature>
<feature type="disulfide bond" evidence="1">
    <location>
        <begin position="154"/>
        <end position="170"/>
    </location>
</feature>
<feature type="disulfide bond" evidence="1">
    <location>
        <begin position="191"/>
        <end position="248"/>
    </location>
</feature>
<name>AT1B3_XENLA</name>
<comment type="function">
    <text>This is the non-catalytic component of the active enzyme, which catalyzes the hydrolysis of ATP coupled with the exchange of Na(+) and K(+) ions across the plasma membrane. The exact function of the beta-3 subunit is not known.</text>
</comment>
<comment type="subunit">
    <text evidence="4">The sodium/potassium-transporting ATPase is composed of a catalytic alpha subunit, an auxiliary non-catalytic beta subunit and an additional regulatory subunit.</text>
</comment>
<comment type="subcellular location">
    <subcellularLocation>
        <location evidence="2">Cell membrane</location>
        <topology>Single-pass type II membrane protein</topology>
    </subcellularLocation>
</comment>
<comment type="tissue specificity">
    <text>Nervous system specific.</text>
</comment>
<comment type="developmental stage">
    <text>During embryogenesis rapid accumulation of beta 3 mRNA begins at stage 14 (early neurula).</text>
</comment>
<comment type="similarity">
    <text evidence="4">Belongs to the X(+)/potassium ATPases subunit beta family.</text>
</comment>
<reference key="1">
    <citation type="journal article" date="1990" name="Proc. Natl. Acad. Sci. U.S.A.">
        <title>A nervous system-specific isotype of the beta subunit of Na+,K(+)-ATPase expressed during early development of Xenopus laevis.</title>
        <authorList>
            <person name="Good P.J."/>
            <person name="Richter K."/>
            <person name="Dawid I.B."/>
        </authorList>
    </citation>
    <scope>NUCLEOTIDE SEQUENCE [MRNA]</scope>
</reference>
<gene>
    <name type="primary">atp1b3</name>
</gene>